<accession>A6ZMM3</accession>
<feature type="chain" id="PRO_0000333386" description="Transcription activator MSS11">
    <location>
        <begin position="1"/>
        <end position="737"/>
    </location>
</feature>
<feature type="domain" description="LisH" evidence="2">
    <location>
        <begin position="51"/>
        <end position="83"/>
    </location>
</feature>
<feature type="region of interest" description="Disordered" evidence="3">
    <location>
        <begin position="1"/>
        <end position="23"/>
    </location>
</feature>
<feature type="region of interest" description="Disordered" evidence="3">
    <location>
        <begin position="191"/>
        <end position="220"/>
    </location>
</feature>
<feature type="region of interest" description="Disordered" evidence="3">
    <location>
        <begin position="268"/>
        <end position="347"/>
    </location>
</feature>
<feature type="region of interest" description="Disordered" evidence="3">
    <location>
        <begin position="413"/>
        <end position="439"/>
    </location>
</feature>
<feature type="region of interest" description="Disordered" evidence="3">
    <location>
        <begin position="572"/>
        <end position="660"/>
    </location>
</feature>
<feature type="compositionally biased region" description="Polar residues" evidence="3">
    <location>
        <begin position="207"/>
        <end position="220"/>
    </location>
</feature>
<feature type="compositionally biased region" description="Low complexity" evidence="3">
    <location>
        <begin position="269"/>
        <end position="314"/>
    </location>
</feature>
<feature type="compositionally biased region" description="Polar residues" evidence="3">
    <location>
        <begin position="330"/>
        <end position="347"/>
    </location>
</feature>
<feature type="compositionally biased region" description="Polar residues" evidence="3">
    <location>
        <begin position="421"/>
        <end position="439"/>
    </location>
</feature>
<feature type="compositionally biased region" description="Polar residues" evidence="3">
    <location>
        <begin position="572"/>
        <end position="585"/>
    </location>
</feature>
<feature type="compositionally biased region" description="Low complexity" evidence="3">
    <location>
        <begin position="590"/>
        <end position="643"/>
    </location>
</feature>
<feature type="compositionally biased region" description="Basic residues" evidence="3">
    <location>
        <begin position="646"/>
        <end position="655"/>
    </location>
</feature>
<reference key="1">
    <citation type="journal article" date="2007" name="Proc. Natl. Acad. Sci. U.S.A.">
        <title>Genome sequencing and comparative analysis of Saccharomyces cerevisiae strain YJM789.</title>
        <authorList>
            <person name="Wei W."/>
            <person name="McCusker J.H."/>
            <person name="Hyman R.W."/>
            <person name="Jones T."/>
            <person name="Ning Y."/>
            <person name="Cao Z."/>
            <person name="Gu Z."/>
            <person name="Bruno D."/>
            <person name="Miranda M."/>
            <person name="Nguyen M."/>
            <person name="Wilhelmy J."/>
            <person name="Komp C."/>
            <person name="Tamse R."/>
            <person name="Wang X."/>
            <person name="Jia P."/>
            <person name="Luedi P."/>
            <person name="Oefner P.J."/>
            <person name="David L."/>
            <person name="Dietrich F.S."/>
            <person name="Li Y."/>
            <person name="Davis R.W."/>
            <person name="Steinmetz L.M."/>
        </authorList>
    </citation>
    <scope>NUCLEOTIDE SEQUENCE [LARGE SCALE GENOMIC DNA]</scope>
    <source>
        <strain>YJM789</strain>
    </source>
</reference>
<evidence type="ECO:0000250" key="1"/>
<evidence type="ECO:0000255" key="2">
    <source>
        <dbReference type="PROSITE-ProRule" id="PRU00126"/>
    </source>
</evidence>
<evidence type="ECO:0000256" key="3">
    <source>
        <dbReference type="SAM" id="MobiDB-lite"/>
    </source>
</evidence>
<evidence type="ECO:0000305" key="4"/>
<dbReference type="EMBL" id="AAFW02000021">
    <property type="protein sequence ID" value="EDN64097.1"/>
    <property type="molecule type" value="Genomic_DNA"/>
</dbReference>
<dbReference type="HOGENOM" id="CLU_368109_0_0_1"/>
<dbReference type="Proteomes" id="UP000007060">
    <property type="component" value="Unassembled WGS sequence"/>
</dbReference>
<dbReference type="GO" id="GO:0005737">
    <property type="term" value="C:cytoplasm"/>
    <property type="evidence" value="ECO:0007669"/>
    <property type="project" value="UniProtKB-SubCell"/>
</dbReference>
<dbReference type="GO" id="GO:0005634">
    <property type="term" value="C:nucleus"/>
    <property type="evidence" value="ECO:0007669"/>
    <property type="project" value="UniProtKB-SubCell"/>
</dbReference>
<dbReference type="GO" id="GO:0009889">
    <property type="term" value="P:regulation of biosynthetic process"/>
    <property type="evidence" value="ECO:0007669"/>
    <property type="project" value="UniProtKB-ARBA"/>
</dbReference>
<dbReference type="InterPro" id="IPR006594">
    <property type="entry name" value="LisH"/>
</dbReference>
<dbReference type="PANTHER" id="PTHR45093:SF2">
    <property type="entry name" value="LISH DOMAIN-CONTAINING PROTEIN"/>
    <property type="match status" value="1"/>
</dbReference>
<dbReference type="PANTHER" id="PTHR45093">
    <property type="entry name" value="TRANSCRIPTION ACTIVATOR MSS11"/>
    <property type="match status" value="1"/>
</dbReference>
<dbReference type="Pfam" id="PF08513">
    <property type="entry name" value="LisH"/>
    <property type="match status" value="1"/>
</dbReference>
<dbReference type="SMART" id="SM00667">
    <property type="entry name" value="LisH"/>
    <property type="match status" value="1"/>
</dbReference>
<dbReference type="PROSITE" id="PS50896">
    <property type="entry name" value="LISH"/>
    <property type="match status" value="1"/>
</dbReference>
<comment type="function">
    <text evidence="1">Transcription factor that regulates pseudohyphal differentiation, invasive growth, floculation, adhesion and starch metabolism in response to nutrient availability.</text>
</comment>
<comment type="subunit">
    <text evidence="1">Interacts with FLO8, STE12 and TEC1.</text>
</comment>
<comment type="subcellular location">
    <subcellularLocation>
        <location evidence="1">Cytoplasm</location>
    </subcellularLocation>
    <subcellularLocation>
        <location evidence="1">Nucleus</location>
    </subcellularLocation>
</comment>
<comment type="similarity">
    <text evidence="4">Belongs to the MSS11 family.</text>
</comment>
<name>MSS11_YEAS7</name>
<gene>
    <name type="primary">MSS11</name>
    <name type="ORF">SCY_4339</name>
</gene>
<organism>
    <name type="scientific">Saccharomyces cerevisiae (strain YJM789)</name>
    <name type="common">Baker's yeast</name>
    <dbReference type="NCBI Taxonomy" id="307796"/>
    <lineage>
        <taxon>Eukaryota</taxon>
        <taxon>Fungi</taxon>
        <taxon>Dikarya</taxon>
        <taxon>Ascomycota</taxon>
        <taxon>Saccharomycotina</taxon>
        <taxon>Saccharomycetes</taxon>
        <taxon>Saccharomycetales</taxon>
        <taxon>Saccharomycetaceae</taxon>
        <taxon>Saccharomyces</taxon>
    </lineage>
</organism>
<sequence length="737" mass="82560">MDNTTNINTNERSSNTDFSSAPNIKGLNSHTQLQFDADSRVFVSDAMAKNSKQLLYAHIYNYLIKNNYWNSAAKFLSEADLPLSRINGSASGEKTSLNASLKQGLMDIASKGGIVSEDGLLPSKMLMDANDTFLLEWWEIFQSLFNGDLESGYQQDHNPLRERIIPILPANSKSNMPSHFSNLPPNVIPPTQNSFPVSEESFRPNGDGSNFNLNDPTNRNVSERFLSRTSGVYDKQNSANFTPDTAINSDIAGQQYATINLHKHFNDLQSPAQPQQSSQQQIQQPQRQPQHQQQQQQQQQQQQQQQQQQQQQQQTPYPIVNPQMVPHIPSENSHSTGLMPSVPPTNQQFNAQTQSSMFSDQQRFFQYQLHHQNQGQAPSFQQSQSGRFDDMNAMKMFFQQQALQQNSLQQNLGNQNYQSNTRNNTAEETTPTNDNNANGNSLLQEHIRARFNKMKTIPQQMKNQNTVANPVVSDITSQQQYMHMMMQRMAANQQLQNSAFPPDTNRIAPANNAMPLQPGNMGPPVIENPGMRQTNPSGQNPMINMQPLYQNVSSAMHAFAPQQQFHLPQHYKTNTSVPQNDSTSVFPLPNNNNNNNNNNNNNNNSNNSNNNNNNNNSNNTPTVSQPSSKRTSSSSTTPNITTTIQPKRKQRVGKTKTKESRKVAAAQKVMKSKKLEQNGDSAATNFINVTPKDSGGKGTVKVQNSNSQQQLNGSFSMDTETFDIFNIGDFSPDLMDS</sequence>
<keyword id="KW-0010">Activator</keyword>
<keyword id="KW-0963">Cytoplasm</keyword>
<keyword id="KW-0539">Nucleus</keyword>
<keyword id="KW-0804">Transcription</keyword>
<keyword id="KW-0805">Transcription regulation</keyword>
<protein>
    <recommendedName>
        <fullName>Transcription activator MSS11</fullName>
    </recommendedName>
    <alternativeName>
        <fullName>Multicopy suppressor of STA genes protein 11</fullName>
    </alternativeName>
</protein>
<proteinExistence type="inferred from homology"/>